<feature type="transit peptide" description="Mitochondrion" evidence="2 3">
    <location>
        <begin position="1"/>
        <end position="33"/>
    </location>
</feature>
<feature type="chain" id="PRO_0000399808" description="Calcium uptake protein 1, mitochondrial">
    <location>
        <begin position="34"/>
        <end position="481"/>
    </location>
</feature>
<feature type="domain" description="EF-hand 1" evidence="4">
    <location>
        <begin position="220"/>
        <end position="255"/>
    </location>
</feature>
<feature type="domain" description="EF-hand 2" evidence="4">
    <location>
        <begin position="413"/>
        <end position="448"/>
    </location>
</feature>
<feature type="region of interest" description="Disordered" evidence="5">
    <location>
        <begin position="58"/>
        <end position="82"/>
    </location>
</feature>
<feature type="region of interest" description="Polybasic region" evidence="2">
    <location>
        <begin position="101"/>
        <end position="112"/>
    </location>
</feature>
<feature type="region of interest" description="K/R-ring" evidence="2">
    <location>
        <begin position="128"/>
        <end position="131"/>
    </location>
</feature>
<feature type="region of interest" description="K/R-ring" evidence="2">
    <location>
        <begin position="264"/>
        <end position="268"/>
    </location>
</feature>
<feature type="region of interest" description="C-helix region" evidence="2">
    <location>
        <begin position="460"/>
        <end position="470"/>
    </location>
</feature>
<feature type="compositionally biased region" description="Basic and acidic residues" evidence="5">
    <location>
        <begin position="69"/>
        <end position="82"/>
    </location>
</feature>
<feature type="binding site" evidence="4">
    <location>
        <position position="233"/>
    </location>
    <ligand>
        <name>Ca(2+)</name>
        <dbReference type="ChEBI" id="CHEBI:29108"/>
        <label>1</label>
    </ligand>
</feature>
<feature type="binding site" evidence="4">
    <location>
        <position position="235"/>
    </location>
    <ligand>
        <name>Ca(2+)</name>
        <dbReference type="ChEBI" id="CHEBI:29108"/>
        <label>1</label>
    </ligand>
</feature>
<feature type="binding site" evidence="4">
    <location>
        <position position="237"/>
    </location>
    <ligand>
        <name>Ca(2+)</name>
        <dbReference type="ChEBI" id="CHEBI:29108"/>
        <label>1</label>
    </ligand>
</feature>
<feature type="binding site" evidence="4">
    <location>
        <position position="239"/>
    </location>
    <ligand>
        <name>Ca(2+)</name>
        <dbReference type="ChEBI" id="CHEBI:29108"/>
        <label>1</label>
    </ligand>
</feature>
<feature type="binding site" evidence="4">
    <location>
        <position position="244"/>
    </location>
    <ligand>
        <name>Ca(2+)</name>
        <dbReference type="ChEBI" id="CHEBI:29108"/>
        <label>1</label>
    </ligand>
</feature>
<feature type="binding site" evidence="4">
    <location>
        <position position="426"/>
    </location>
    <ligand>
        <name>Ca(2+)</name>
        <dbReference type="ChEBI" id="CHEBI:29108"/>
        <label>2</label>
    </ligand>
</feature>
<feature type="binding site" evidence="4">
    <location>
        <position position="428"/>
    </location>
    <ligand>
        <name>Ca(2+)</name>
        <dbReference type="ChEBI" id="CHEBI:29108"/>
        <label>2</label>
    </ligand>
</feature>
<feature type="binding site" evidence="4">
    <location>
        <position position="430"/>
    </location>
    <ligand>
        <name>Ca(2+)</name>
        <dbReference type="ChEBI" id="CHEBI:29108"/>
        <label>2</label>
    </ligand>
</feature>
<feature type="binding site" evidence="4">
    <location>
        <position position="432"/>
    </location>
    <ligand>
        <name>Ca(2+)</name>
        <dbReference type="ChEBI" id="CHEBI:29108"/>
        <label>2</label>
    </ligand>
</feature>
<feature type="binding site" evidence="4">
    <location>
        <position position="437"/>
    </location>
    <ligand>
        <name>Ca(2+)</name>
        <dbReference type="ChEBI" id="CHEBI:29108"/>
        <label>2</label>
    </ligand>
</feature>
<feature type="modified residue" description="Phosphoserine" evidence="1">
    <location>
        <position position="124"/>
    </location>
</feature>
<feature type="modified residue" description="Asymmetric dimethylarginine" evidence="2">
    <location>
        <position position="460"/>
    </location>
</feature>
<feature type="disulfide bond" description="Interchain (with C-413 in MICU2)" evidence="2">
    <location>
        <position position="468"/>
    </location>
</feature>
<gene>
    <name type="primary">MICU1</name>
    <name type="synonym">CBARA1</name>
    <name type="ORF">PANDA_018142</name>
</gene>
<evidence type="ECO:0000250" key="1">
    <source>
        <dbReference type="UniProtKB" id="Q8VCX5"/>
    </source>
</evidence>
<evidence type="ECO:0000250" key="2">
    <source>
        <dbReference type="UniProtKB" id="Q9BPX6"/>
    </source>
</evidence>
<evidence type="ECO:0000255" key="3"/>
<evidence type="ECO:0000255" key="4">
    <source>
        <dbReference type="PROSITE-ProRule" id="PRU00448"/>
    </source>
</evidence>
<evidence type="ECO:0000256" key="5">
    <source>
        <dbReference type="SAM" id="MobiDB-lite"/>
    </source>
</evidence>
<evidence type="ECO:0000305" key="6"/>
<name>MICU1_AILME</name>
<comment type="function">
    <text evidence="2">Calcium sensor of the mitochondrial calcium uniporter (MCU) channel, which senses calcium level via its EF-hand domains. MICU1 and MICU2 (or MICU3) form a disulfide-linked heterodimer that stimulates and inhibits MCU activity, depending on the concentration of calcium. At low calcium levels, MICU1 occludes the pore of the MCU channel, preventing mitochondrial calcium uptake. At higher calcium levels, calcium-binding to MICU1 and MICU2 (or MICU3) induces a conformational change that weakens MCU-MICU1 interactions and moves the MICU1-MICU2 heterodimer away from the pore, allowing calcium permeation through the MCU channel. Also required to protect against manganese toxicity by preventing manganese uptake by MCU: mechanistically, manganese-binding to its EF-hand domains does not induce any conformational change, maintaining MCU pore occlusion. Acts as a regulator of mitochondrial cristae structure independently of its ability to regulate the mitochondrial calcium uniporter channel. Regulates glucose-dependent insulin secretion in pancreatic beta-cells by regulating mitochondrial calcium uptake. Induces T-helper 1-mediated autoreactivity, which is accompanied by the release of IFNG.</text>
</comment>
<comment type="subunit">
    <text evidence="2">Heterodimer; disulfide-linked; heterodimerizes with MICU2 or MICU3. Homodimer; disulfide-linked. Component of the uniplex complex, composed of MCU, EMRE/SMDT1, MICU1 and MICU2 (or MICU3) in a 4:4:1:1 stoichiometry. The composition of calcium sensors within the uniplex complex can differ depending on tissues: a MICU1 homodimer can be present instead of the MICU1-MICU2 heterodimer in skeletal-muscle and kidney. MICU1 is recruited to the uniplex complex by EMRE/SMDT1, and it associates with MCU at low calcium levels, occluding the pore of the MCU channel. Associates with the MICOS complex. Interacts with SLC25A23. Interacts with CHCHD4/MIA40; which introduces the interchain disulfide bond with MICU2. Interacts (when methylated) with UCP2; leading to decrease the calcium sensitivity of MICU1.</text>
</comment>
<comment type="subcellular location">
    <subcellularLocation>
        <location evidence="2">Mitochondrion intermembrane space</location>
    </subcellularLocation>
    <subcellularLocation>
        <location evidence="2">Mitochondrion inner membrane</location>
    </subcellularLocation>
    <text evidence="2">Recruited to the mitochondrial inner membrane by EMRE/SMDT1. Also localizes to mitochondrial cristae junctions.</text>
</comment>
<comment type="domain">
    <text evidence="2">The EF-hand domains have high affinity for calcium and act as sensors of calcium levels.</text>
</comment>
<comment type="domain">
    <text evidence="2">The polybasic region mediates interaction with EMRE/SMDT1 and association with the uniplex complex.</text>
</comment>
<comment type="domain">
    <text evidence="2">Lysine and arginine residues in the K/R-ring mediate electrostatic interactions with MCU and play a key role in MCU inhibition in absence of calcium.</text>
</comment>
<comment type="domain">
    <text evidence="2">The C-helix plays a key role in mitochondrial calcium uptake, probably by mediating interaction with MICU2.</text>
</comment>
<comment type="PTM">
    <text evidence="1">Phosphorylation at Ser-124 by AKT1 impairs its maturation and stability.</text>
</comment>
<comment type="PTM">
    <text evidence="2">Asymmetric dimethylation at Arg-460 by PRMT1 decreases the calcium sensitivity of MICU1 by promoting interaction with UCP2.</text>
</comment>
<comment type="PTM">
    <text evidence="2">Degraded by YME1L1 when not complexed as homodimer or heterodimer. Not degraded when complexed as homodimer or heterodimer; the presence of the interchain disulfide bond protecting MICU1 from degradation by YME1L1.</text>
</comment>
<comment type="similarity">
    <text evidence="6">Belongs to the MICU1 family. MICU1 subfamily.</text>
</comment>
<reference key="1">
    <citation type="journal article" date="2010" name="Nature">
        <title>The sequence and de novo assembly of the giant panda genome.</title>
        <authorList>
            <person name="Li R."/>
            <person name="Fan W."/>
            <person name="Tian G."/>
            <person name="Zhu H."/>
            <person name="He L."/>
            <person name="Cai J."/>
            <person name="Huang Q."/>
            <person name="Cai Q."/>
            <person name="Li B."/>
            <person name="Bai Y."/>
            <person name="Zhang Z."/>
            <person name="Zhang Y."/>
            <person name="Wang W."/>
            <person name="Li J."/>
            <person name="Wei F."/>
            <person name="Li H."/>
            <person name="Jian M."/>
            <person name="Li J."/>
            <person name="Zhang Z."/>
            <person name="Nielsen R."/>
            <person name="Li D."/>
            <person name="Gu W."/>
            <person name="Yang Z."/>
            <person name="Xuan Z."/>
            <person name="Ryder O.A."/>
            <person name="Leung F.C."/>
            <person name="Zhou Y."/>
            <person name="Cao J."/>
            <person name="Sun X."/>
            <person name="Fu Y."/>
            <person name="Fang X."/>
            <person name="Guo X."/>
            <person name="Wang B."/>
            <person name="Hou R."/>
            <person name="Shen F."/>
            <person name="Mu B."/>
            <person name="Ni P."/>
            <person name="Lin R."/>
            <person name="Qian W."/>
            <person name="Wang G."/>
            <person name="Yu C."/>
            <person name="Nie W."/>
            <person name="Wang J."/>
            <person name="Wu Z."/>
            <person name="Liang H."/>
            <person name="Min J."/>
            <person name="Wu Q."/>
            <person name="Cheng S."/>
            <person name="Ruan J."/>
            <person name="Wang M."/>
            <person name="Shi Z."/>
            <person name="Wen M."/>
            <person name="Liu B."/>
            <person name="Ren X."/>
            <person name="Zheng H."/>
            <person name="Dong D."/>
            <person name="Cook K."/>
            <person name="Shan G."/>
            <person name="Zhang H."/>
            <person name="Kosiol C."/>
            <person name="Xie X."/>
            <person name="Lu Z."/>
            <person name="Zheng H."/>
            <person name="Li Y."/>
            <person name="Steiner C.C."/>
            <person name="Lam T.T."/>
            <person name="Lin S."/>
            <person name="Zhang Q."/>
            <person name="Li G."/>
            <person name="Tian J."/>
            <person name="Gong T."/>
            <person name="Liu H."/>
            <person name="Zhang D."/>
            <person name="Fang L."/>
            <person name="Ye C."/>
            <person name="Zhang J."/>
            <person name="Hu W."/>
            <person name="Xu A."/>
            <person name="Ren Y."/>
            <person name="Zhang G."/>
            <person name="Bruford M.W."/>
            <person name="Li Q."/>
            <person name="Ma L."/>
            <person name="Guo Y."/>
            <person name="An N."/>
            <person name="Hu Y."/>
            <person name="Zheng Y."/>
            <person name="Shi Y."/>
            <person name="Li Z."/>
            <person name="Liu Q."/>
            <person name="Chen Y."/>
            <person name="Zhao J."/>
            <person name="Qu N."/>
            <person name="Zhao S."/>
            <person name="Tian F."/>
            <person name="Wang X."/>
            <person name="Wang H."/>
            <person name="Xu L."/>
            <person name="Liu X."/>
            <person name="Vinar T."/>
            <person name="Wang Y."/>
            <person name="Lam T.W."/>
            <person name="Yiu S.M."/>
            <person name="Liu S."/>
            <person name="Zhang H."/>
            <person name="Li D."/>
            <person name="Huang Y."/>
            <person name="Wang X."/>
            <person name="Yang G."/>
            <person name="Jiang Z."/>
            <person name="Wang J."/>
            <person name="Qin N."/>
            <person name="Li L."/>
            <person name="Li J."/>
            <person name="Bolund L."/>
            <person name="Kristiansen K."/>
            <person name="Wong G.K."/>
            <person name="Olson M."/>
            <person name="Zhang X."/>
            <person name="Li S."/>
            <person name="Yang H."/>
            <person name="Wang J."/>
            <person name="Wang J."/>
        </authorList>
    </citation>
    <scope>NUCLEOTIDE SEQUENCE [LARGE SCALE GENOMIC DNA]</scope>
</reference>
<organism>
    <name type="scientific">Ailuropoda melanoleuca</name>
    <name type="common">Giant panda</name>
    <dbReference type="NCBI Taxonomy" id="9646"/>
    <lineage>
        <taxon>Eukaryota</taxon>
        <taxon>Metazoa</taxon>
        <taxon>Chordata</taxon>
        <taxon>Craniata</taxon>
        <taxon>Vertebrata</taxon>
        <taxon>Euteleostomi</taxon>
        <taxon>Mammalia</taxon>
        <taxon>Eutheria</taxon>
        <taxon>Laurasiatheria</taxon>
        <taxon>Carnivora</taxon>
        <taxon>Caniformia</taxon>
        <taxon>Ursidae</taxon>
        <taxon>Ailuropoda</taxon>
    </lineage>
</organism>
<accession>D2HZB0</accession>
<protein>
    <recommendedName>
        <fullName>Calcium uptake protein 1, mitochondrial</fullName>
    </recommendedName>
    <alternativeName>
        <fullName>Calcium-binding atopy-related autoantigen 1 homolog</fullName>
    </alternativeName>
</protein>
<dbReference type="EMBL" id="GL193792">
    <property type="protein sequence ID" value="EFB17693.1"/>
    <property type="molecule type" value="Genomic_DNA"/>
</dbReference>
<dbReference type="SMR" id="D2HZB0"/>
<dbReference type="STRING" id="9646.ENSAMEP00000018360"/>
<dbReference type="eggNOG" id="KOG2643">
    <property type="taxonomic scope" value="Eukaryota"/>
</dbReference>
<dbReference type="InParanoid" id="D2HZB0"/>
<dbReference type="Proteomes" id="UP000008912">
    <property type="component" value="Unassembled WGS sequence"/>
</dbReference>
<dbReference type="GO" id="GO:0005743">
    <property type="term" value="C:mitochondrial inner membrane"/>
    <property type="evidence" value="ECO:0000250"/>
    <property type="project" value="UniProtKB"/>
</dbReference>
<dbReference type="GO" id="GO:0005758">
    <property type="term" value="C:mitochondrial intermembrane space"/>
    <property type="evidence" value="ECO:0000250"/>
    <property type="project" value="UniProtKB"/>
</dbReference>
<dbReference type="GO" id="GO:0031966">
    <property type="term" value="C:mitochondrial membrane"/>
    <property type="evidence" value="ECO:0000250"/>
    <property type="project" value="UniProtKB"/>
</dbReference>
<dbReference type="GO" id="GO:1990246">
    <property type="term" value="C:uniplex complex"/>
    <property type="evidence" value="ECO:0000250"/>
    <property type="project" value="UniProtKB"/>
</dbReference>
<dbReference type="GO" id="GO:0005509">
    <property type="term" value="F:calcium ion binding"/>
    <property type="evidence" value="ECO:0000250"/>
    <property type="project" value="UniProtKB"/>
</dbReference>
<dbReference type="GO" id="GO:0061891">
    <property type="term" value="F:calcium ion sensor activity"/>
    <property type="evidence" value="ECO:0000250"/>
    <property type="project" value="UniProtKB"/>
</dbReference>
<dbReference type="GO" id="GO:0036444">
    <property type="term" value="P:calcium import into the mitochondrion"/>
    <property type="evidence" value="ECO:0000250"/>
    <property type="project" value="UniProtKB"/>
</dbReference>
<dbReference type="GO" id="GO:0070509">
    <property type="term" value="P:calcium ion import"/>
    <property type="evidence" value="ECO:0000250"/>
    <property type="project" value="UniProtKB"/>
</dbReference>
<dbReference type="GO" id="GO:0051560">
    <property type="term" value="P:mitochondrial calcium ion homeostasis"/>
    <property type="evidence" value="ECO:0000250"/>
    <property type="project" value="UniProtKB"/>
</dbReference>
<dbReference type="GO" id="GO:0006851">
    <property type="term" value="P:mitochondrial calcium ion transmembrane transport"/>
    <property type="evidence" value="ECO:0000250"/>
    <property type="project" value="UniProtKB"/>
</dbReference>
<dbReference type="GO" id="GO:1903852">
    <property type="term" value="P:positive regulation of cristae formation"/>
    <property type="evidence" value="ECO:0000250"/>
    <property type="project" value="UniProtKB"/>
</dbReference>
<dbReference type="GO" id="GO:0051561">
    <property type="term" value="P:positive regulation of mitochondrial calcium ion concentration"/>
    <property type="evidence" value="ECO:0000250"/>
    <property type="project" value="UniProtKB"/>
</dbReference>
<dbReference type="GO" id="GO:1900069">
    <property type="term" value="P:regulation of cellular hyperosmotic salinity response"/>
    <property type="evidence" value="ECO:0000250"/>
    <property type="project" value="UniProtKB"/>
</dbReference>
<dbReference type="CDD" id="cd16173">
    <property type="entry name" value="EFh_MICU1"/>
    <property type="match status" value="1"/>
</dbReference>
<dbReference type="FunFam" id="1.10.238.10:FF:000088">
    <property type="entry name" value="Calcium uptake protein 1, mitochondrial"/>
    <property type="match status" value="1"/>
</dbReference>
<dbReference type="FunFam" id="1.10.238.10:FF:000159">
    <property type="entry name" value="Calcium uptake protein 1, mitochondrial"/>
    <property type="match status" value="1"/>
</dbReference>
<dbReference type="Gene3D" id="1.10.238.10">
    <property type="entry name" value="EF-hand"/>
    <property type="match status" value="2"/>
</dbReference>
<dbReference type="InterPro" id="IPR011992">
    <property type="entry name" value="EF-hand-dom_pair"/>
</dbReference>
<dbReference type="InterPro" id="IPR018247">
    <property type="entry name" value="EF_Hand_1_Ca_BS"/>
</dbReference>
<dbReference type="InterPro" id="IPR002048">
    <property type="entry name" value="EF_hand_dom"/>
</dbReference>
<dbReference type="InterPro" id="IPR039800">
    <property type="entry name" value="MICU1/2/3"/>
</dbReference>
<dbReference type="PANTHER" id="PTHR12294:SF1">
    <property type="entry name" value="CALCIUM UPTAKE PROTEIN 1, MITOCHONDRIAL"/>
    <property type="match status" value="1"/>
</dbReference>
<dbReference type="PANTHER" id="PTHR12294">
    <property type="entry name" value="EF HAND DOMAIN FAMILY A1,A2-RELATED"/>
    <property type="match status" value="1"/>
</dbReference>
<dbReference type="Pfam" id="PF13202">
    <property type="entry name" value="EF-hand_5"/>
    <property type="match status" value="1"/>
</dbReference>
<dbReference type="Pfam" id="PF13833">
    <property type="entry name" value="EF-hand_8"/>
    <property type="match status" value="1"/>
</dbReference>
<dbReference type="SMART" id="SM00054">
    <property type="entry name" value="EFh"/>
    <property type="match status" value="2"/>
</dbReference>
<dbReference type="SUPFAM" id="SSF47473">
    <property type="entry name" value="EF-hand"/>
    <property type="match status" value="2"/>
</dbReference>
<dbReference type="PROSITE" id="PS00018">
    <property type="entry name" value="EF_HAND_1"/>
    <property type="match status" value="2"/>
</dbReference>
<dbReference type="PROSITE" id="PS50222">
    <property type="entry name" value="EF_HAND_2"/>
    <property type="match status" value="2"/>
</dbReference>
<keyword id="KW-0106">Calcium</keyword>
<keyword id="KW-0109">Calcium transport</keyword>
<keyword id="KW-1015">Disulfide bond</keyword>
<keyword id="KW-0406">Ion transport</keyword>
<keyword id="KW-0472">Membrane</keyword>
<keyword id="KW-0479">Metal-binding</keyword>
<keyword id="KW-0488">Methylation</keyword>
<keyword id="KW-0496">Mitochondrion</keyword>
<keyword id="KW-0999">Mitochondrion inner membrane</keyword>
<keyword id="KW-0597">Phosphoprotein</keyword>
<keyword id="KW-1185">Reference proteome</keyword>
<keyword id="KW-0677">Repeat</keyword>
<keyword id="KW-0809">Transit peptide</keyword>
<keyword id="KW-0813">Transport</keyword>
<proteinExistence type="inferred from homology"/>
<sequence>MFRLHSLSALAELAVGSRCYHGGSQPTQMKRRLMMVAFLGASAVTASTGLLWKRALAESPPSVNNPKSELGDKGKNKDEGEVCNHEKKAADVCLEPHPEEKKKKRSGFRDRKVMEYENRIRAYSTPDKIFRYFATLKVINEPGESEVFMTPQDFVRSITPNEKQPEHLGLDQYTIKRFDGKKIAQEREKFADEGSIFYTLGECGLISFSDYIFLTTVLSTPQRNFEIAFKMFDLNGDGEVDMEEFEQASCPGNIIRSQTSMGMRHRDRPTTGNTLKSGLCSALTTYFFGADLKGKLTIKNFLEFQRKLQHDVLKLEFERHDPVDGKITERQFGGMLLAYSGVQSKKLTAMQKQLKKHFKEGKGLTFQEVENFFTFLKNINDVDTALSFYHMAGASLDKVTMQQVARTVAKVELSDHVCDVVFALFDCDGNGELSNKEFVSIMKQRLMRGLEKPKDMGFTRLMQAMWKCAQETAWDFALPKQ</sequence>